<sequence length="873" mass="97111">MANTVGGILSGVNPFHYNSSSPLTLFLFQACLILLVCNLIHIPFSMMRQPKVISEVISGVILGPTIFGQIPNYTNTIFPTSSIPGLNLVANLGIILFMFFLGLEVDIAFIKKHLKKALVIGIVTLAVPFGFGCLLAIPLFHTYANKTEGERHIKFSVFMVFIAVSISVTAFPVLCRILNELRLIKDRAGIVVLAAGIINDIMGWILLALSIILSSAEGSPVNTVYILLITFAWFLIYFFPLKYLLRWVLIRTHELDRSKPSPLATMCILFIMFISAYFTDIIGVHPIFGAFIAGLVVPRDDHYVVKLTERMEDIPNIVFIPIYFAVAGLNVDLTLLNEGRDWGYVFATIGIAIFTKIISGTLTAKLTGLFWREATAAGVLMSCKGIVEIVVLTVGLNAGIISRKIFGMFVLMALVSTFVTTPLTQLVYPDSYRDGVRKSLSTPAEDDGAADGLDSEGVDKTEINTQLNSLADVSKYRIGELTTVINTTEAISPSLKLLNYLSLGVSPKPKNNKHKNETSLSRMTTATDSTLKSNTFKIKKMVHIWSKSVDDVDTNLSVIDEKLTPFEGVGALRAIHLRLLTERTTDLLQSSSLYNDDPHFTANTDSLLQIFDIFSNLSKIPFSSEVIFSTMREKAANIATMKMDSTDLILLPLKGASYEYRGSPVFIDEKYANFDHIYSHLLGLNELSSTFFKSIFQSLKANFAVQISNTYGRLNADRFKRKRFNLLLPKPYLTQSDYLGLYLLLLICYRDGYNNDNASCSIFINSKNIDFAKDLSTAFAEHDWLNESTIKIVDIPFETKVPEEAIEKPSFIETVLDVGLSDTALADIEETTFIIGEDLPDESEPFSEEVRTVIFEGSNRRFDTLIVHHFSSE</sequence>
<dbReference type="EMBL" id="X77087">
    <property type="protein sequence ID" value="CAA54359.1"/>
    <property type="molecule type" value="Genomic_DNA"/>
</dbReference>
<dbReference type="EMBL" id="Z49369">
    <property type="protein sequence ID" value="CAA89387.1"/>
    <property type="molecule type" value="Genomic_DNA"/>
</dbReference>
<dbReference type="EMBL" id="BK006943">
    <property type="protein sequence ID" value="DAA08706.1"/>
    <property type="molecule type" value="Genomic_DNA"/>
</dbReference>
<dbReference type="PIR" id="S46584">
    <property type="entry name" value="S46584"/>
</dbReference>
<dbReference type="RefSeq" id="NP_012441.1">
    <property type="nucleotide sequence ID" value="NM_001181527.1"/>
</dbReference>
<dbReference type="SMR" id="P40309"/>
<dbReference type="BioGRID" id="33663">
    <property type="interactions" value="74"/>
</dbReference>
<dbReference type="DIP" id="DIP-4799N"/>
<dbReference type="FunCoup" id="P40309">
    <property type="interactions" value="253"/>
</dbReference>
<dbReference type="IntAct" id="P40309">
    <property type="interactions" value="2"/>
</dbReference>
<dbReference type="STRING" id="4932.YJL094C"/>
<dbReference type="TCDB" id="2.A.37.4.1">
    <property type="family name" value="the monovalent cation:proton antiporter-2 (cpa2) family"/>
</dbReference>
<dbReference type="CarbonylDB" id="P40309"/>
<dbReference type="iPTMnet" id="P40309"/>
<dbReference type="PaxDb" id="4932-YJL094C"/>
<dbReference type="PeptideAtlas" id="P40309"/>
<dbReference type="EnsemblFungi" id="YJL094C_mRNA">
    <property type="protein sequence ID" value="YJL094C"/>
    <property type="gene ID" value="YJL094C"/>
</dbReference>
<dbReference type="GeneID" id="853351"/>
<dbReference type="KEGG" id="sce:YJL094C"/>
<dbReference type="AGR" id="SGD:S000003630"/>
<dbReference type="SGD" id="S000003630">
    <property type="gene designation" value="KHA1"/>
</dbReference>
<dbReference type="VEuPathDB" id="FungiDB:YJL094C"/>
<dbReference type="eggNOG" id="KOG1650">
    <property type="taxonomic scope" value="Eukaryota"/>
</dbReference>
<dbReference type="HOGENOM" id="CLU_005126_10_1_1"/>
<dbReference type="InParanoid" id="P40309"/>
<dbReference type="OMA" id="GMFILMA"/>
<dbReference type="OrthoDB" id="2687058at2759"/>
<dbReference type="BioCyc" id="YEAST:G3O-31549-MONOMER"/>
<dbReference type="BioGRID-ORCS" id="853351">
    <property type="hits" value="9 hits in 10 CRISPR screens"/>
</dbReference>
<dbReference type="PRO" id="PR:P40309"/>
<dbReference type="Proteomes" id="UP000002311">
    <property type="component" value="Chromosome X"/>
</dbReference>
<dbReference type="RNAct" id="P40309">
    <property type="molecule type" value="protein"/>
</dbReference>
<dbReference type="GO" id="GO:0005783">
    <property type="term" value="C:endoplasmic reticulum"/>
    <property type="evidence" value="ECO:0007005"/>
    <property type="project" value="SGD"/>
</dbReference>
<dbReference type="GO" id="GO:0005794">
    <property type="term" value="C:Golgi apparatus"/>
    <property type="evidence" value="ECO:0000314"/>
    <property type="project" value="SGD"/>
</dbReference>
<dbReference type="GO" id="GO:0016020">
    <property type="term" value="C:membrane"/>
    <property type="evidence" value="ECO:0007669"/>
    <property type="project" value="UniProtKB-SubCell"/>
</dbReference>
<dbReference type="GO" id="GO:0005739">
    <property type="term" value="C:mitochondrion"/>
    <property type="evidence" value="ECO:0007005"/>
    <property type="project" value="SGD"/>
</dbReference>
<dbReference type="GO" id="GO:0015386">
    <property type="term" value="F:potassium:proton antiporter activity"/>
    <property type="evidence" value="ECO:0000315"/>
    <property type="project" value="SGD"/>
</dbReference>
<dbReference type="GO" id="GO:0098662">
    <property type="term" value="P:inorganic cation transmembrane transport"/>
    <property type="evidence" value="ECO:0000315"/>
    <property type="project" value="SGD"/>
</dbReference>
<dbReference type="FunFam" id="1.20.1530.20:FF:000036">
    <property type="entry name" value="Kha1p"/>
    <property type="match status" value="1"/>
</dbReference>
<dbReference type="Gene3D" id="1.20.1530.20">
    <property type="match status" value="1"/>
</dbReference>
<dbReference type="InterPro" id="IPR006153">
    <property type="entry name" value="Cation/H_exchanger_TM"/>
</dbReference>
<dbReference type="InterPro" id="IPR050794">
    <property type="entry name" value="CPA2_transporter"/>
</dbReference>
<dbReference type="InterPro" id="IPR004771">
    <property type="entry name" value="K/H_exchanger"/>
</dbReference>
<dbReference type="InterPro" id="IPR038770">
    <property type="entry name" value="Na+/solute_symporter_sf"/>
</dbReference>
<dbReference type="NCBIfam" id="TIGR00932">
    <property type="entry name" value="2a37"/>
    <property type="match status" value="1"/>
</dbReference>
<dbReference type="PANTHER" id="PTHR32468">
    <property type="entry name" value="CATION/H + ANTIPORTER"/>
    <property type="match status" value="1"/>
</dbReference>
<dbReference type="PANTHER" id="PTHR32468:SF0">
    <property type="entry name" value="K(+)_H(+) ANTIPORTER 1"/>
    <property type="match status" value="1"/>
</dbReference>
<dbReference type="Pfam" id="PF00999">
    <property type="entry name" value="Na_H_Exchanger"/>
    <property type="match status" value="1"/>
</dbReference>
<accession>P40309</accession>
<accession>D6VW90</accession>
<name>KHA1_YEAST</name>
<keyword id="KW-0050">Antiport</keyword>
<keyword id="KW-0406">Ion transport</keyword>
<keyword id="KW-1017">Isopeptide bond</keyword>
<keyword id="KW-0472">Membrane</keyword>
<keyword id="KW-0597">Phosphoprotein</keyword>
<keyword id="KW-0630">Potassium</keyword>
<keyword id="KW-0633">Potassium transport</keyword>
<keyword id="KW-1185">Reference proteome</keyword>
<keyword id="KW-0812">Transmembrane</keyword>
<keyword id="KW-1133">Transmembrane helix</keyword>
<keyword id="KW-0813">Transport</keyword>
<keyword id="KW-0832">Ubl conjugation</keyword>
<feature type="chain" id="PRO_0000196618" description="K(+)/H(+) antiporter 1">
    <location>
        <begin position="1"/>
        <end position="873"/>
    </location>
</feature>
<feature type="topological domain" description="Extracellular" evidence="1">
    <location>
        <begin position="1"/>
        <end position="23"/>
    </location>
</feature>
<feature type="transmembrane region" description="Helical" evidence="1">
    <location>
        <begin position="24"/>
        <end position="44"/>
    </location>
</feature>
<feature type="topological domain" description="Cytoplasmic" evidence="1">
    <location>
        <begin position="45"/>
        <end position="51"/>
    </location>
</feature>
<feature type="transmembrane region" description="Helical" evidence="1">
    <location>
        <begin position="52"/>
        <end position="72"/>
    </location>
</feature>
<feature type="topological domain" description="Extracellular" evidence="1">
    <location>
        <begin position="73"/>
        <end position="82"/>
    </location>
</feature>
<feature type="transmembrane region" description="Helical" evidence="1">
    <location>
        <begin position="83"/>
        <end position="103"/>
    </location>
</feature>
<feature type="topological domain" description="Cytoplasmic" evidence="1">
    <location>
        <begin position="104"/>
        <end position="116"/>
    </location>
</feature>
<feature type="transmembrane region" description="Helical" evidence="1">
    <location>
        <begin position="117"/>
        <end position="137"/>
    </location>
</feature>
<feature type="topological domain" description="Extracellular" evidence="1">
    <location>
        <begin position="138"/>
        <end position="154"/>
    </location>
</feature>
<feature type="transmembrane region" description="Helical" evidence="1">
    <location>
        <begin position="155"/>
        <end position="175"/>
    </location>
</feature>
<feature type="topological domain" description="Cytoplasmic" evidence="1">
    <location>
        <begin position="176"/>
        <end position="188"/>
    </location>
</feature>
<feature type="transmembrane region" description="Helical" evidence="1">
    <location>
        <begin position="189"/>
        <end position="209"/>
    </location>
</feature>
<feature type="topological domain" description="Extracellular" evidence="1">
    <location>
        <begin position="210"/>
        <end position="220"/>
    </location>
</feature>
<feature type="transmembrane region" description="Helical" evidence="1">
    <location>
        <begin position="221"/>
        <end position="241"/>
    </location>
</feature>
<feature type="topological domain" description="Cytoplasmic" evidence="1">
    <location>
        <begin position="242"/>
        <end position="267"/>
    </location>
</feature>
<feature type="transmembrane region" description="Helical" evidence="1">
    <location>
        <begin position="268"/>
        <end position="288"/>
    </location>
</feature>
<feature type="topological domain" description="Extracellular" evidence="1">
    <location>
        <begin position="289"/>
        <end position="316"/>
    </location>
</feature>
<feature type="transmembrane region" description="Helical" evidence="1">
    <location>
        <begin position="317"/>
        <end position="337"/>
    </location>
</feature>
<feature type="topological domain" description="Cytoplasmic" evidence="1">
    <location>
        <begin position="338"/>
        <end position="341"/>
    </location>
</feature>
<feature type="transmembrane region" description="Helical" evidence="1">
    <location>
        <begin position="342"/>
        <end position="362"/>
    </location>
</feature>
<feature type="topological domain" description="Extracellular" evidence="1">
    <location>
        <begin position="363"/>
        <end position="375"/>
    </location>
</feature>
<feature type="transmembrane region" description="Helical" evidence="1">
    <location>
        <begin position="376"/>
        <end position="396"/>
    </location>
</feature>
<feature type="topological domain" description="Cytoplasmic" evidence="1">
    <location>
        <begin position="397"/>
        <end position="404"/>
    </location>
</feature>
<feature type="transmembrane region" description="Helical" evidence="1">
    <location>
        <begin position="405"/>
        <end position="425"/>
    </location>
</feature>
<feature type="topological domain" description="Extracellular" evidence="1">
    <location>
        <begin position="426"/>
        <end position="726"/>
    </location>
</feature>
<feature type="transmembrane region" description="Helical" evidence="1">
    <location>
        <begin position="727"/>
        <end position="747"/>
    </location>
</feature>
<feature type="topological domain" description="Cytoplasmic" evidence="1">
    <location>
        <begin position="748"/>
        <end position="873"/>
    </location>
</feature>
<feature type="modified residue" description="Phosphoserine" evidence="4 5">
    <location>
        <position position="557"/>
    </location>
</feature>
<feature type="cross-link" description="Glycyl lysine isopeptide (Lys-Gly) (interchain with G-Cter in ubiquitin)" evidence="6">
    <location>
        <position position="562"/>
    </location>
</feature>
<gene>
    <name type="primary">KHA1</name>
    <name type="ordered locus">YJL094C</name>
    <name type="ORF">J0909</name>
</gene>
<evidence type="ECO:0000255" key="1"/>
<evidence type="ECO:0000269" key="2">
    <source>
    </source>
</evidence>
<evidence type="ECO:0000305" key="3"/>
<evidence type="ECO:0007744" key="4">
    <source>
    </source>
</evidence>
<evidence type="ECO:0007744" key="5">
    <source>
    </source>
</evidence>
<evidence type="ECO:0007744" key="6">
    <source>
    </source>
</evidence>
<organism>
    <name type="scientific">Saccharomyces cerevisiae (strain ATCC 204508 / S288c)</name>
    <name type="common">Baker's yeast</name>
    <dbReference type="NCBI Taxonomy" id="559292"/>
    <lineage>
        <taxon>Eukaryota</taxon>
        <taxon>Fungi</taxon>
        <taxon>Dikarya</taxon>
        <taxon>Ascomycota</taxon>
        <taxon>Saccharomycotina</taxon>
        <taxon>Saccharomycetes</taxon>
        <taxon>Saccharomycetales</taxon>
        <taxon>Saccharomycetaceae</taxon>
        <taxon>Saccharomyces</taxon>
    </lineage>
</organism>
<reference key="1">
    <citation type="journal article" date="1994" name="Yeast">
        <title>Sequence and function analysis of a 9.46 kb fragment of Saccharomyces cerevisiae chromosome X.</title>
        <authorList>
            <person name="Miosga T."/>
            <person name="Witzel A."/>
            <person name="Zimmermann F.K."/>
        </authorList>
    </citation>
    <scope>NUCLEOTIDE SEQUENCE [GENOMIC DNA]</scope>
    <source>
        <strain>ATCC 204508 / S288c</strain>
    </source>
</reference>
<reference key="2">
    <citation type="journal article" date="1996" name="EMBO J.">
        <title>Complete nucleotide sequence of Saccharomyces cerevisiae chromosome X.</title>
        <authorList>
            <person name="Galibert F."/>
            <person name="Alexandraki D."/>
            <person name="Baur A."/>
            <person name="Boles E."/>
            <person name="Chalwatzis N."/>
            <person name="Chuat J.-C."/>
            <person name="Coster F."/>
            <person name="Cziepluch C."/>
            <person name="de Haan M."/>
            <person name="Domdey H."/>
            <person name="Durand P."/>
            <person name="Entian K.-D."/>
            <person name="Gatius M."/>
            <person name="Goffeau A."/>
            <person name="Grivell L.A."/>
            <person name="Hennemann A."/>
            <person name="Herbert C.J."/>
            <person name="Heumann K."/>
            <person name="Hilger F."/>
            <person name="Hollenberg C.P."/>
            <person name="Huang M.-E."/>
            <person name="Jacq C."/>
            <person name="Jauniaux J.-C."/>
            <person name="Katsoulou C."/>
            <person name="Kirchrath L."/>
            <person name="Kleine K."/>
            <person name="Kordes E."/>
            <person name="Koetter P."/>
            <person name="Liebl S."/>
            <person name="Louis E.J."/>
            <person name="Manus V."/>
            <person name="Mewes H.-W."/>
            <person name="Miosga T."/>
            <person name="Obermaier B."/>
            <person name="Perea J."/>
            <person name="Pohl T.M."/>
            <person name="Portetelle D."/>
            <person name="Pujol A."/>
            <person name="Purnelle B."/>
            <person name="Ramezani Rad M."/>
            <person name="Rasmussen S.W."/>
            <person name="Rose M."/>
            <person name="Rossau R."/>
            <person name="Schaaff-Gerstenschlaeger I."/>
            <person name="Smits P.H.M."/>
            <person name="Scarcez T."/>
            <person name="Soriano N."/>
            <person name="To Van D."/>
            <person name="Tzermia M."/>
            <person name="Van Broekhoven A."/>
            <person name="Vandenbol M."/>
            <person name="Wedler H."/>
            <person name="von Wettstein D."/>
            <person name="Wambutt R."/>
            <person name="Zagulski M."/>
            <person name="Zollner A."/>
            <person name="Karpfinger-Hartl L."/>
        </authorList>
    </citation>
    <scope>NUCLEOTIDE SEQUENCE [LARGE SCALE GENOMIC DNA]</scope>
    <source>
        <strain>ATCC 204508 / S288c</strain>
    </source>
</reference>
<reference key="3">
    <citation type="journal article" date="2014" name="G3 (Bethesda)">
        <title>The reference genome sequence of Saccharomyces cerevisiae: Then and now.</title>
        <authorList>
            <person name="Engel S.R."/>
            <person name="Dietrich F.S."/>
            <person name="Fisk D.G."/>
            <person name="Binkley G."/>
            <person name="Balakrishnan R."/>
            <person name="Costanzo M.C."/>
            <person name="Dwight S.S."/>
            <person name="Hitz B.C."/>
            <person name="Karra K."/>
            <person name="Nash R.S."/>
            <person name="Weng S."/>
            <person name="Wong E.D."/>
            <person name="Lloyd P."/>
            <person name="Skrzypek M.S."/>
            <person name="Miyasato S.R."/>
            <person name="Simison M."/>
            <person name="Cherry J.M."/>
        </authorList>
    </citation>
    <scope>GENOME REANNOTATION</scope>
    <source>
        <strain>ATCC 204508 / S288c</strain>
    </source>
</reference>
<reference key="4">
    <citation type="journal article" date="2003" name="Nature">
        <title>Global analysis of protein expression in yeast.</title>
        <authorList>
            <person name="Ghaemmaghami S."/>
            <person name="Huh W.-K."/>
            <person name="Bower K."/>
            <person name="Howson R.W."/>
            <person name="Belle A."/>
            <person name="Dephoure N."/>
            <person name="O'Shea E.K."/>
            <person name="Weissman J.S."/>
        </authorList>
    </citation>
    <scope>LEVEL OF PROTEIN EXPRESSION [LARGE SCALE ANALYSIS]</scope>
</reference>
<reference key="5">
    <citation type="journal article" date="2006" name="Proc. Natl. Acad. Sci. U.S.A.">
        <title>A global topology map of the Saccharomyces cerevisiae membrane proteome.</title>
        <authorList>
            <person name="Kim H."/>
            <person name="Melen K."/>
            <person name="Oesterberg M."/>
            <person name="von Heijne G."/>
        </authorList>
    </citation>
    <scope>TOPOLOGY [LARGE SCALE ANALYSIS]</scope>
    <source>
        <strain>ATCC 208353 / W303-1A</strain>
    </source>
</reference>
<reference key="6">
    <citation type="journal article" date="2007" name="J. Proteome Res.">
        <title>Large-scale phosphorylation analysis of alpha-factor-arrested Saccharomyces cerevisiae.</title>
        <authorList>
            <person name="Li X."/>
            <person name="Gerber S.A."/>
            <person name="Rudner A.D."/>
            <person name="Beausoleil S.A."/>
            <person name="Haas W."/>
            <person name="Villen J."/>
            <person name="Elias J.E."/>
            <person name="Gygi S.P."/>
        </authorList>
    </citation>
    <scope>PHOSPHORYLATION [LARGE SCALE ANALYSIS] AT SER-557</scope>
    <scope>IDENTIFICATION BY MASS SPECTROMETRY [LARGE SCALE ANALYSIS]</scope>
    <source>
        <strain>ADR376</strain>
    </source>
</reference>
<reference key="7">
    <citation type="journal article" date="2009" name="Science">
        <title>Global analysis of Cdk1 substrate phosphorylation sites provides insights into evolution.</title>
        <authorList>
            <person name="Holt L.J."/>
            <person name="Tuch B.B."/>
            <person name="Villen J."/>
            <person name="Johnson A.D."/>
            <person name="Gygi S.P."/>
            <person name="Morgan D.O."/>
        </authorList>
    </citation>
    <scope>PHOSPHORYLATION [LARGE SCALE ANALYSIS] AT SER-557</scope>
    <scope>IDENTIFICATION BY MASS SPECTROMETRY [LARGE SCALE ANALYSIS]</scope>
</reference>
<reference key="8">
    <citation type="journal article" date="2012" name="Proteomics">
        <title>Sites of ubiquitin attachment in Saccharomyces cerevisiae.</title>
        <authorList>
            <person name="Starita L.M."/>
            <person name="Lo R.S."/>
            <person name="Eng J.K."/>
            <person name="von Haller P.D."/>
            <person name="Fields S."/>
        </authorList>
    </citation>
    <scope>UBIQUITINATION [LARGE SCALE ANALYSIS] AT LYS-562</scope>
    <scope>IDENTIFICATION BY MASS SPECTROMETRY [LARGE SCALE ANALYSIS]</scope>
</reference>
<comment type="function">
    <text>Potassium-proton antiport.</text>
</comment>
<comment type="subcellular location">
    <subcellularLocation>
        <location evidence="3">Membrane</location>
        <topology evidence="3">Multi-pass membrane protein</topology>
    </subcellularLocation>
</comment>
<comment type="miscellaneous">
    <text evidence="2">Present with 172 molecules/cell in log phase SD medium.</text>
</comment>
<comment type="similarity">
    <text evidence="3">Belongs to the monovalent cation:proton antiporter 2 (CPA2) transporter (TC 2.A.37) family.</text>
</comment>
<protein>
    <recommendedName>
        <fullName>K(+)/H(+) antiporter 1</fullName>
    </recommendedName>
</protein>
<proteinExistence type="evidence at protein level"/>